<accession>Q9E6R0</accession>
<protein>
    <recommendedName>
        <fullName evidence="1">Portal protein</fullName>
    </recommendedName>
</protein>
<name>PORTL_GAHVM</name>
<organism>
    <name type="scientific">Gallid herpesvirus 2 (strain Chicken/Md5/ATCC VR-987)</name>
    <name type="common">GaHV-2</name>
    <name type="synonym">Marek's disease herpesvirus type 1</name>
    <dbReference type="NCBI Taxonomy" id="10389"/>
    <lineage>
        <taxon>Viruses</taxon>
        <taxon>Duplodnaviria</taxon>
        <taxon>Heunggongvirae</taxon>
        <taxon>Peploviricota</taxon>
        <taxon>Herviviricetes</taxon>
        <taxon>Herpesvirales</taxon>
        <taxon>Orthoherpesviridae</taxon>
        <taxon>Alphaherpesvirinae</taxon>
        <taxon>Mardivirus</taxon>
        <taxon>Mardivirus gallidalpha2</taxon>
        <taxon>Gallid alphaherpesvirus 2</taxon>
    </lineage>
</organism>
<evidence type="ECO:0000255" key="1">
    <source>
        <dbReference type="HAMAP-Rule" id="MF_04012"/>
    </source>
</evidence>
<evidence type="ECO:0000256" key="2">
    <source>
        <dbReference type="SAM" id="MobiDB-lite"/>
    </source>
</evidence>
<organismHost>
    <name type="scientific">Gallus gallus</name>
    <name type="common">Chicken</name>
    <dbReference type="NCBI Taxonomy" id="9031"/>
</organismHost>
<reference key="1">
    <citation type="journal article" date="2000" name="J. Virol.">
        <title>The genome of a very virulent Marek's disease virus.</title>
        <authorList>
            <person name="Tulman E.R."/>
            <person name="Afonso C.L."/>
            <person name="Lu Z."/>
            <person name="Zsak L."/>
            <person name="Rock D.L."/>
            <person name="Kutish G.F."/>
        </authorList>
    </citation>
    <scope>NUCLEOTIDE SEQUENCE [LARGE SCALE GENOMIC DNA]</scope>
</reference>
<gene>
    <name type="primary">MDV018</name>
</gene>
<proteinExistence type="inferred from homology"/>
<dbReference type="EMBL" id="AF243438">
    <property type="protein sequence ID" value="AAG14198.1"/>
    <property type="molecule type" value="Genomic_DNA"/>
</dbReference>
<dbReference type="RefSeq" id="YP_001033934.1">
    <property type="nucleotide sequence ID" value="NC_002229.3"/>
</dbReference>
<dbReference type="GeneID" id="4811479"/>
<dbReference type="KEGG" id="vg:4811479"/>
<dbReference type="Proteomes" id="UP000008072">
    <property type="component" value="Segment"/>
</dbReference>
<dbReference type="GO" id="GO:0042025">
    <property type="term" value="C:host cell nucleus"/>
    <property type="evidence" value="ECO:0007669"/>
    <property type="project" value="UniProtKB-SubCell"/>
</dbReference>
<dbReference type="GO" id="GO:0044423">
    <property type="term" value="C:virion component"/>
    <property type="evidence" value="ECO:0007669"/>
    <property type="project" value="UniProtKB-KW"/>
</dbReference>
<dbReference type="GO" id="GO:0051276">
    <property type="term" value="P:chromosome organization"/>
    <property type="evidence" value="ECO:0007669"/>
    <property type="project" value="InterPro"/>
</dbReference>
<dbReference type="HAMAP" id="MF_04012">
    <property type="entry name" value="HSV_PORTL"/>
    <property type="match status" value="1"/>
</dbReference>
<dbReference type="InterPro" id="IPR002660">
    <property type="entry name" value="Herpes_Portal"/>
</dbReference>
<dbReference type="Pfam" id="PF01763">
    <property type="entry name" value="Herpes_UL6"/>
    <property type="match status" value="1"/>
</dbReference>
<comment type="function">
    <text evidence="1">Forms a portal in the viral capsid through which viral DNA is translocated during DNA packaging. Assembles as a dodecamer at a single fivefold axe of the T=16 icosahedric capsid. Binds to the molecular motor that translocates the viral DNA, termed terminase.</text>
</comment>
<comment type="subunit">
    <text evidence="1">Homododecamerizes. Interacts with terminase subunits TRM1 and TRM3.</text>
</comment>
<comment type="subcellular location">
    <subcellularLocation>
        <location evidence="1">Virion</location>
    </subcellularLocation>
    <subcellularLocation>
        <location evidence="1">Host nucleus</location>
    </subcellularLocation>
</comment>
<comment type="similarity">
    <text evidence="1">Belongs to the herpesviridae portal protein family.</text>
</comment>
<sequence length="722" mass="82411">MDGYDRRAPYDLNSRKINHPDFESVMSQRDTFNNVSSKQCMENQWIVIHPTRQTRMFKEILAGRLGYTDGQGIYNSVRSTETAIRQIQNTILTLSLDAVRYDDLKNDWIRHADMRGMSAKKLARTYGMHSEAEAVKVAENVFVTWRKTLQTTLINLARQLISCFTTANINTSSFSKYIDWICCLGIVPVVRHDRSARATSSIPTCAGRSTVFPNWAFHDASSRLRVVDSVMARGKQIVNYLSNSMSAVSILEYDRTLIEYNFFKRELRVKDILSGERGECIVIWRPVMNDGGVIFDSPMQRIYKEIIECHDLRQHATLCRLVNTAPVKVLIAKRDDGCKGVAGAQRVIDKVLGDQPENAASSAASRLVKLIIGLKGMRHVGDITDTVRDYLEETSGHLLDAASIDTSQPGFGQSNRAQSSTTEETRRNTIKIRDAFHSSVVTSINEMLEGYVNKLFNTVEGLKAANKDLLAKLCSKELELDRVRTEHLISKQAHTDMGNSQYSPTLETLARDLKHDVIDVGEVMDDDSYVANSFQSRYIPAYDVDLKRLSELWEQEMLRCFKLTRATNNQGHEVSISYSNSAITLLLAPYFFSVLNIYDIGPIVTNHEVYKSEEELCNSVFEKTRIHVYLDDLALIFNADVKRAIAKYFLVRNNSGRQREAEDLPDGHHGRRNDFHSPSSRRERYSRRSGYKRHRWNRESRRDYRRTQSTTNGEDDDGSQRD</sequence>
<keyword id="KW-1015">Disulfide bond</keyword>
<keyword id="KW-1048">Host nucleus</keyword>
<keyword id="KW-1185">Reference proteome</keyword>
<keyword id="KW-0231">Viral genome packaging</keyword>
<keyword id="KW-1188">Viral release from host cell</keyword>
<keyword id="KW-0946">Virion</keyword>
<feature type="chain" id="PRO_0000406543" description="Portal protein">
    <location>
        <begin position="1"/>
        <end position="722"/>
    </location>
</feature>
<feature type="region of interest" description="Disordered" evidence="2">
    <location>
        <begin position="402"/>
        <end position="426"/>
    </location>
</feature>
<feature type="region of interest" description="Putative leucine zipper motif" evidence="1">
    <location>
        <begin position="448"/>
        <end position="469"/>
    </location>
</feature>
<feature type="region of interest" description="Disordered" evidence="2">
    <location>
        <begin position="658"/>
        <end position="722"/>
    </location>
</feature>
<feature type="compositionally biased region" description="Polar residues" evidence="2">
    <location>
        <begin position="404"/>
        <end position="422"/>
    </location>
</feature>
<feature type="compositionally biased region" description="Basic and acidic residues" evidence="2">
    <location>
        <begin position="658"/>
        <end position="683"/>
    </location>
</feature>
<feature type="compositionally biased region" description="Basic residues" evidence="2">
    <location>
        <begin position="684"/>
        <end position="696"/>
    </location>
</feature>
<feature type="compositionally biased region" description="Basic and acidic residues" evidence="2">
    <location>
        <begin position="697"/>
        <end position="706"/>
    </location>
</feature>
<feature type="compositionally biased region" description="Acidic residues" evidence="2">
    <location>
        <begin position="713"/>
        <end position="722"/>
    </location>
</feature>
<feature type="disulfide bond" description="Interchain" evidence="1">
    <location>
        <position position="183"/>
    </location>
</feature>
<feature type="disulfide bond" description="Interchain" evidence="1">
    <location>
        <position position="280"/>
    </location>
</feature>